<evidence type="ECO:0000255" key="1">
    <source>
        <dbReference type="HAMAP-Rule" id="MF_01227"/>
    </source>
</evidence>
<accession>A1VXA6</accession>
<organism>
    <name type="scientific">Campylobacter jejuni subsp. jejuni serotype O:23/36 (strain 81-176)</name>
    <dbReference type="NCBI Taxonomy" id="354242"/>
    <lineage>
        <taxon>Bacteria</taxon>
        <taxon>Pseudomonadati</taxon>
        <taxon>Campylobacterota</taxon>
        <taxon>Epsilonproteobacteria</taxon>
        <taxon>Campylobacterales</taxon>
        <taxon>Campylobacteraceae</taxon>
        <taxon>Campylobacter</taxon>
    </lineage>
</organism>
<proteinExistence type="inferred from homology"/>
<keyword id="KW-0067">ATP-binding</keyword>
<keyword id="KW-0315">Glutamine amidotransferase</keyword>
<keyword id="KW-0436">Ligase</keyword>
<keyword id="KW-0460">Magnesium</keyword>
<keyword id="KW-0479">Metal-binding</keyword>
<keyword id="KW-0547">Nucleotide-binding</keyword>
<keyword id="KW-0665">Pyrimidine biosynthesis</keyword>
<comment type="function">
    <text evidence="1">Catalyzes the ATP-dependent amination of UTP to CTP with either L-glutamine or ammonia as the source of nitrogen. Regulates intracellular CTP levels through interactions with the four ribonucleotide triphosphates.</text>
</comment>
<comment type="catalytic activity">
    <reaction evidence="1">
        <text>UTP + L-glutamine + ATP + H2O = CTP + L-glutamate + ADP + phosphate + 2 H(+)</text>
        <dbReference type="Rhea" id="RHEA:26426"/>
        <dbReference type="ChEBI" id="CHEBI:15377"/>
        <dbReference type="ChEBI" id="CHEBI:15378"/>
        <dbReference type="ChEBI" id="CHEBI:29985"/>
        <dbReference type="ChEBI" id="CHEBI:30616"/>
        <dbReference type="ChEBI" id="CHEBI:37563"/>
        <dbReference type="ChEBI" id="CHEBI:43474"/>
        <dbReference type="ChEBI" id="CHEBI:46398"/>
        <dbReference type="ChEBI" id="CHEBI:58359"/>
        <dbReference type="ChEBI" id="CHEBI:456216"/>
        <dbReference type="EC" id="6.3.4.2"/>
    </reaction>
</comment>
<comment type="catalytic activity">
    <reaction evidence="1">
        <text>L-glutamine + H2O = L-glutamate + NH4(+)</text>
        <dbReference type="Rhea" id="RHEA:15889"/>
        <dbReference type="ChEBI" id="CHEBI:15377"/>
        <dbReference type="ChEBI" id="CHEBI:28938"/>
        <dbReference type="ChEBI" id="CHEBI:29985"/>
        <dbReference type="ChEBI" id="CHEBI:58359"/>
    </reaction>
</comment>
<comment type="catalytic activity">
    <reaction evidence="1">
        <text>UTP + NH4(+) + ATP = CTP + ADP + phosphate + 2 H(+)</text>
        <dbReference type="Rhea" id="RHEA:16597"/>
        <dbReference type="ChEBI" id="CHEBI:15378"/>
        <dbReference type="ChEBI" id="CHEBI:28938"/>
        <dbReference type="ChEBI" id="CHEBI:30616"/>
        <dbReference type="ChEBI" id="CHEBI:37563"/>
        <dbReference type="ChEBI" id="CHEBI:43474"/>
        <dbReference type="ChEBI" id="CHEBI:46398"/>
        <dbReference type="ChEBI" id="CHEBI:456216"/>
    </reaction>
</comment>
<comment type="activity regulation">
    <text evidence="1">Allosterically activated by GTP, when glutamine is the substrate; GTP has no effect on the reaction when ammonia is the substrate. The allosteric effector GTP functions by stabilizing the protein conformation that binds the tetrahedral intermediate(s) formed during glutamine hydrolysis. Inhibited by the product CTP, via allosteric rather than competitive inhibition.</text>
</comment>
<comment type="pathway">
    <text evidence="1">Pyrimidine metabolism; CTP biosynthesis via de novo pathway; CTP from UDP: step 2/2.</text>
</comment>
<comment type="subunit">
    <text evidence="1">Homotetramer.</text>
</comment>
<comment type="miscellaneous">
    <text evidence="1">CTPSs have evolved a hybrid strategy for distinguishing between UTP and CTP. The overlapping regions of the product feedback inhibitory and substrate sites recognize a common feature in both compounds, the triphosphate moiety. To differentiate isosteric substrate and product pyrimidine rings, an additional pocket far from the expected kinase/ligase catalytic site, specifically recognizes the cytosine and ribose portions of the product inhibitor.</text>
</comment>
<comment type="similarity">
    <text evidence="1">Belongs to the CTP synthase family.</text>
</comment>
<dbReference type="EC" id="6.3.4.2" evidence="1"/>
<dbReference type="EMBL" id="CP000538">
    <property type="protein sequence ID" value="EAQ72004.1"/>
    <property type="molecule type" value="Genomic_DNA"/>
</dbReference>
<dbReference type="RefSeq" id="WP_002855601.1">
    <property type="nucleotide sequence ID" value="NC_008787.1"/>
</dbReference>
<dbReference type="SMR" id="A1VXA6"/>
<dbReference type="KEGG" id="cjj:CJJ81176_0054"/>
<dbReference type="eggNOG" id="COG0504">
    <property type="taxonomic scope" value="Bacteria"/>
</dbReference>
<dbReference type="HOGENOM" id="CLU_011675_5_0_7"/>
<dbReference type="UniPathway" id="UPA00159">
    <property type="reaction ID" value="UER00277"/>
</dbReference>
<dbReference type="Proteomes" id="UP000000646">
    <property type="component" value="Chromosome"/>
</dbReference>
<dbReference type="GO" id="GO:0005829">
    <property type="term" value="C:cytosol"/>
    <property type="evidence" value="ECO:0007669"/>
    <property type="project" value="TreeGrafter"/>
</dbReference>
<dbReference type="GO" id="GO:0005524">
    <property type="term" value="F:ATP binding"/>
    <property type="evidence" value="ECO:0007669"/>
    <property type="project" value="UniProtKB-KW"/>
</dbReference>
<dbReference type="GO" id="GO:0003883">
    <property type="term" value="F:CTP synthase activity"/>
    <property type="evidence" value="ECO:0007669"/>
    <property type="project" value="UniProtKB-UniRule"/>
</dbReference>
<dbReference type="GO" id="GO:0004359">
    <property type="term" value="F:glutaminase activity"/>
    <property type="evidence" value="ECO:0007669"/>
    <property type="project" value="RHEA"/>
</dbReference>
<dbReference type="GO" id="GO:0042802">
    <property type="term" value="F:identical protein binding"/>
    <property type="evidence" value="ECO:0007669"/>
    <property type="project" value="TreeGrafter"/>
</dbReference>
<dbReference type="GO" id="GO:0046872">
    <property type="term" value="F:metal ion binding"/>
    <property type="evidence" value="ECO:0007669"/>
    <property type="project" value="UniProtKB-KW"/>
</dbReference>
<dbReference type="GO" id="GO:0044210">
    <property type="term" value="P:'de novo' CTP biosynthetic process"/>
    <property type="evidence" value="ECO:0007669"/>
    <property type="project" value="UniProtKB-UniRule"/>
</dbReference>
<dbReference type="GO" id="GO:0019856">
    <property type="term" value="P:pyrimidine nucleobase biosynthetic process"/>
    <property type="evidence" value="ECO:0007669"/>
    <property type="project" value="TreeGrafter"/>
</dbReference>
<dbReference type="CDD" id="cd03113">
    <property type="entry name" value="CTPS_N"/>
    <property type="match status" value="1"/>
</dbReference>
<dbReference type="CDD" id="cd01746">
    <property type="entry name" value="GATase1_CTP_Synthase"/>
    <property type="match status" value="1"/>
</dbReference>
<dbReference type="FunFam" id="3.40.50.300:FF:000009">
    <property type="entry name" value="CTP synthase"/>
    <property type="match status" value="1"/>
</dbReference>
<dbReference type="FunFam" id="3.40.50.880:FF:000002">
    <property type="entry name" value="CTP synthase"/>
    <property type="match status" value="1"/>
</dbReference>
<dbReference type="Gene3D" id="3.40.50.880">
    <property type="match status" value="1"/>
</dbReference>
<dbReference type="Gene3D" id="3.40.50.300">
    <property type="entry name" value="P-loop containing nucleotide triphosphate hydrolases"/>
    <property type="match status" value="1"/>
</dbReference>
<dbReference type="HAMAP" id="MF_01227">
    <property type="entry name" value="PyrG"/>
    <property type="match status" value="1"/>
</dbReference>
<dbReference type="InterPro" id="IPR029062">
    <property type="entry name" value="Class_I_gatase-like"/>
</dbReference>
<dbReference type="InterPro" id="IPR004468">
    <property type="entry name" value="CTP_synthase"/>
</dbReference>
<dbReference type="InterPro" id="IPR017456">
    <property type="entry name" value="CTP_synthase_N"/>
</dbReference>
<dbReference type="InterPro" id="IPR017926">
    <property type="entry name" value="GATASE"/>
</dbReference>
<dbReference type="InterPro" id="IPR033828">
    <property type="entry name" value="GATase1_CTP_Synthase"/>
</dbReference>
<dbReference type="InterPro" id="IPR027417">
    <property type="entry name" value="P-loop_NTPase"/>
</dbReference>
<dbReference type="NCBIfam" id="NF003792">
    <property type="entry name" value="PRK05380.1"/>
    <property type="match status" value="1"/>
</dbReference>
<dbReference type="NCBIfam" id="TIGR00337">
    <property type="entry name" value="PyrG"/>
    <property type="match status" value="1"/>
</dbReference>
<dbReference type="PANTHER" id="PTHR11550">
    <property type="entry name" value="CTP SYNTHASE"/>
    <property type="match status" value="1"/>
</dbReference>
<dbReference type="PANTHER" id="PTHR11550:SF0">
    <property type="entry name" value="CTP SYNTHASE-RELATED"/>
    <property type="match status" value="1"/>
</dbReference>
<dbReference type="Pfam" id="PF06418">
    <property type="entry name" value="CTP_synth_N"/>
    <property type="match status" value="1"/>
</dbReference>
<dbReference type="Pfam" id="PF00117">
    <property type="entry name" value="GATase"/>
    <property type="match status" value="1"/>
</dbReference>
<dbReference type="SUPFAM" id="SSF52317">
    <property type="entry name" value="Class I glutamine amidotransferase-like"/>
    <property type="match status" value="1"/>
</dbReference>
<dbReference type="SUPFAM" id="SSF52540">
    <property type="entry name" value="P-loop containing nucleoside triphosphate hydrolases"/>
    <property type="match status" value="1"/>
</dbReference>
<dbReference type="PROSITE" id="PS51273">
    <property type="entry name" value="GATASE_TYPE_1"/>
    <property type="match status" value="1"/>
</dbReference>
<feature type="chain" id="PRO_1000139411" description="CTP synthase">
    <location>
        <begin position="1"/>
        <end position="543"/>
    </location>
</feature>
<feature type="domain" description="Glutamine amidotransferase type-1" evidence="1">
    <location>
        <begin position="292"/>
        <end position="543"/>
    </location>
</feature>
<feature type="region of interest" description="Amidoligase domain" evidence="1">
    <location>
        <begin position="1"/>
        <end position="267"/>
    </location>
</feature>
<feature type="active site" description="Nucleophile; for glutamine hydrolysis" evidence="1">
    <location>
        <position position="381"/>
    </location>
</feature>
<feature type="active site" evidence="1">
    <location>
        <position position="516"/>
    </location>
</feature>
<feature type="active site" evidence="1">
    <location>
        <position position="518"/>
    </location>
</feature>
<feature type="binding site" evidence="1">
    <location>
        <position position="15"/>
    </location>
    <ligand>
        <name>CTP</name>
        <dbReference type="ChEBI" id="CHEBI:37563"/>
        <note>allosteric inhibitor</note>
    </ligand>
</feature>
<feature type="binding site" evidence="1">
    <location>
        <position position="15"/>
    </location>
    <ligand>
        <name>UTP</name>
        <dbReference type="ChEBI" id="CHEBI:46398"/>
    </ligand>
</feature>
<feature type="binding site" evidence="1">
    <location>
        <begin position="16"/>
        <end position="21"/>
    </location>
    <ligand>
        <name>ATP</name>
        <dbReference type="ChEBI" id="CHEBI:30616"/>
    </ligand>
</feature>
<feature type="binding site" evidence="1">
    <location>
        <position position="73"/>
    </location>
    <ligand>
        <name>ATP</name>
        <dbReference type="ChEBI" id="CHEBI:30616"/>
    </ligand>
</feature>
<feature type="binding site" evidence="1">
    <location>
        <position position="73"/>
    </location>
    <ligand>
        <name>Mg(2+)</name>
        <dbReference type="ChEBI" id="CHEBI:18420"/>
    </ligand>
</feature>
<feature type="binding site" evidence="1">
    <location>
        <position position="141"/>
    </location>
    <ligand>
        <name>Mg(2+)</name>
        <dbReference type="ChEBI" id="CHEBI:18420"/>
    </ligand>
</feature>
<feature type="binding site" evidence="1">
    <location>
        <begin position="148"/>
        <end position="150"/>
    </location>
    <ligand>
        <name>CTP</name>
        <dbReference type="ChEBI" id="CHEBI:37563"/>
        <note>allosteric inhibitor</note>
    </ligand>
</feature>
<feature type="binding site" evidence="1">
    <location>
        <begin position="188"/>
        <end position="193"/>
    </location>
    <ligand>
        <name>CTP</name>
        <dbReference type="ChEBI" id="CHEBI:37563"/>
        <note>allosteric inhibitor</note>
    </ligand>
</feature>
<feature type="binding site" evidence="1">
    <location>
        <begin position="188"/>
        <end position="193"/>
    </location>
    <ligand>
        <name>UTP</name>
        <dbReference type="ChEBI" id="CHEBI:46398"/>
    </ligand>
</feature>
<feature type="binding site" evidence="1">
    <location>
        <position position="224"/>
    </location>
    <ligand>
        <name>CTP</name>
        <dbReference type="ChEBI" id="CHEBI:37563"/>
        <note>allosteric inhibitor</note>
    </ligand>
</feature>
<feature type="binding site" evidence="1">
    <location>
        <position position="224"/>
    </location>
    <ligand>
        <name>UTP</name>
        <dbReference type="ChEBI" id="CHEBI:46398"/>
    </ligand>
</feature>
<feature type="binding site" evidence="1">
    <location>
        <position position="354"/>
    </location>
    <ligand>
        <name>L-glutamine</name>
        <dbReference type="ChEBI" id="CHEBI:58359"/>
    </ligand>
</feature>
<feature type="binding site" evidence="1">
    <location>
        <begin position="382"/>
        <end position="385"/>
    </location>
    <ligand>
        <name>L-glutamine</name>
        <dbReference type="ChEBI" id="CHEBI:58359"/>
    </ligand>
</feature>
<feature type="binding site" evidence="1">
    <location>
        <position position="405"/>
    </location>
    <ligand>
        <name>L-glutamine</name>
        <dbReference type="ChEBI" id="CHEBI:58359"/>
    </ligand>
</feature>
<feature type="binding site" evidence="1">
    <location>
        <position position="473"/>
    </location>
    <ligand>
        <name>L-glutamine</name>
        <dbReference type="ChEBI" id="CHEBI:58359"/>
    </ligand>
</feature>
<name>PYRG_CAMJJ</name>
<protein>
    <recommendedName>
        <fullName evidence="1">CTP synthase</fullName>
        <ecNumber evidence="1">6.3.4.2</ecNumber>
    </recommendedName>
    <alternativeName>
        <fullName evidence="1">Cytidine 5'-triphosphate synthase</fullName>
    </alternativeName>
    <alternativeName>
        <fullName evidence="1">Cytidine triphosphate synthetase</fullName>
        <shortName evidence="1">CTP synthetase</shortName>
        <shortName evidence="1">CTPS</shortName>
    </alternativeName>
    <alternativeName>
        <fullName evidence="1">UTP--ammonia ligase</fullName>
    </alternativeName>
</protein>
<reference key="1">
    <citation type="submission" date="2006-12" db="EMBL/GenBank/DDBJ databases">
        <authorList>
            <person name="Fouts D.E."/>
            <person name="Nelson K.E."/>
            <person name="Sebastian Y."/>
        </authorList>
    </citation>
    <scope>NUCLEOTIDE SEQUENCE [LARGE SCALE GENOMIC DNA]</scope>
    <source>
        <strain>81-176</strain>
    </source>
</reference>
<gene>
    <name evidence="1" type="primary">pyrG</name>
    <name type="ordered locus">CJJ81176_0054</name>
</gene>
<sequence>MKQTKYIFVTGGVLSSLGKGIAAASIATLLKNSGLKVSILKADPYINVDPGTMSPFEHGEVFVTDDGAETDLDLGHYERFLDESLSQDNNFTTGRVYQSVIEKERRGEYLGKTIQVIPHIVGEIKDRIKKAGEGKDILIVEIGGTVGDIEGLPFLEAIRALRLEVGKNNAMNIHLTLVPFIKAAGELKTKPTQHSVGELRRIGISPDMIICRSEKALDRDLKDKIAISCGVEKNCVIESVDAASIYQIPLNFLKQDILSPIAEILDLKNLKPNMENWDSLVKRVIAPSNEVKIAFVGKYVDLKESYKSLTEAIIHAGAALDTKVELKWVDSEKLENMESSEVFKDVSGILVAGGFGYRGVEGKIKAIQYARENKIPFLGICLGMQLALVEFARNVLKLKDANSSEFNEKCQNPVVYLIDEFMDTNGEKQIRTAKTPLGGTMRLGAYKCDIKEKSLLAKVYNEVKSVKERHRHRYEANPKYRADFEKHGLIVSGESKGLIEAVELNCHPFFLAVQFHPEFTSRLEHVNPVICSFIKAAINYEDN</sequence>